<comment type="function">
    <text evidence="2">As cone-specific cGMP phosphodiesterase, it plays an essential role in light detection and cone phototransduction by rapidly decreasing intracellular levels of cGMP.</text>
</comment>
<comment type="catalytic activity">
    <reaction evidence="2">
        <text>3',5'-cyclic GMP + H2O = GMP + H(+)</text>
        <dbReference type="Rhea" id="RHEA:16957"/>
        <dbReference type="ChEBI" id="CHEBI:15377"/>
        <dbReference type="ChEBI" id="CHEBI:15378"/>
        <dbReference type="ChEBI" id="CHEBI:57746"/>
        <dbReference type="ChEBI" id="CHEBI:58115"/>
        <dbReference type="EC" id="3.1.4.35"/>
    </reaction>
</comment>
<comment type="cofactor">
    <cofactor evidence="1">
        <name>a divalent metal cation</name>
        <dbReference type="ChEBI" id="CHEBI:60240"/>
    </cofactor>
    <text evidence="1">Binds 2 divalent metal cations per subunit. Site 1 may preferentially bind zinc ions, while site 2 has a preference for magnesium and/or manganese ions.</text>
</comment>
<comment type="subunit">
    <text>Composed of two alpha' subunits that are associated with 3 smaller proteins of 11, 13, and 15 kDa.</text>
</comment>
<comment type="subcellular location">
    <subcellularLocation>
        <location evidence="6">Cell membrane</location>
        <topology evidence="6">Lipid-anchor</topology>
        <orientation evidence="6">Cytoplasmic side</orientation>
    </subcellularLocation>
</comment>
<comment type="similarity">
    <text evidence="6">Belongs to the cyclic nucleotide phosphodiesterase family.</text>
</comment>
<feature type="chain" id="PRO_0000198830" description="Cone cGMP-specific 3',5'-cyclic phosphodiesterase subunit alpha'">
    <location>
        <begin position="1"/>
        <end position="852"/>
    </location>
</feature>
<feature type="propeptide" id="PRO_0000370787" description="Removed in mature form" evidence="3">
    <location>
        <begin position="853"/>
        <end position="855"/>
    </location>
</feature>
<feature type="domain" description="GAF 1">
    <location>
        <begin position="70"/>
        <end position="219"/>
    </location>
</feature>
<feature type="domain" description="GAF 2">
    <location>
        <begin position="251"/>
        <end position="428"/>
    </location>
</feature>
<feature type="domain" description="PDEase" evidence="4">
    <location>
        <begin position="481"/>
        <end position="814"/>
    </location>
</feature>
<feature type="region of interest" description="Disordered" evidence="5">
    <location>
        <begin position="823"/>
        <end position="855"/>
    </location>
</feature>
<feature type="active site" description="Proton donor" evidence="1">
    <location>
        <position position="557"/>
    </location>
</feature>
<feature type="binding site" evidence="1">
    <location>
        <position position="92"/>
    </location>
    <ligand>
        <name>3',5'-cyclic GMP</name>
        <dbReference type="ChEBI" id="CHEBI:57746"/>
    </ligand>
</feature>
<feature type="binding site" evidence="1">
    <location>
        <position position="116"/>
    </location>
    <ligand>
        <name>3',5'-cyclic GMP</name>
        <dbReference type="ChEBI" id="CHEBI:57746"/>
    </ligand>
</feature>
<feature type="binding site" evidence="1">
    <location>
        <begin position="164"/>
        <end position="167"/>
    </location>
    <ligand>
        <name>3',5'-cyclic GMP</name>
        <dbReference type="ChEBI" id="CHEBI:57746"/>
    </ligand>
</feature>
<feature type="binding site" evidence="1">
    <location>
        <position position="171"/>
    </location>
    <ligand>
        <name>3',5'-cyclic GMP</name>
        <dbReference type="ChEBI" id="CHEBI:57746"/>
    </ligand>
</feature>
<feature type="binding site" evidence="1">
    <location>
        <position position="561"/>
    </location>
    <ligand>
        <name>a divalent metal cation</name>
        <dbReference type="ChEBI" id="CHEBI:60240"/>
        <label>1</label>
    </ligand>
</feature>
<feature type="binding site" evidence="1">
    <location>
        <position position="597"/>
    </location>
    <ligand>
        <name>a divalent metal cation</name>
        <dbReference type="ChEBI" id="CHEBI:60240"/>
        <label>1</label>
    </ligand>
</feature>
<feature type="binding site" evidence="1">
    <location>
        <position position="598"/>
    </location>
    <ligand>
        <name>a divalent metal cation</name>
        <dbReference type="ChEBI" id="CHEBI:60240"/>
        <label>1</label>
    </ligand>
</feature>
<feature type="binding site" evidence="1">
    <location>
        <position position="598"/>
    </location>
    <ligand>
        <name>a divalent metal cation</name>
        <dbReference type="ChEBI" id="CHEBI:60240"/>
        <label>2</label>
    </ligand>
</feature>
<feature type="binding site" evidence="1">
    <location>
        <position position="718"/>
    </location>
    <ligand>
        <name>a divalent metal cation</name>
        <dbReference type="ChEBI" id="CHEBI:60240"/>
        <label>1</label>
    </ligand>
</feature>
<feature type="modified residue" description="Cysteine methyl ester" evidence="3">
    <location>
        <position position="852"/>
    </location>
</feature>
<feature type="lipid moiety-binding region" description="S-geranylgeranyl cysteine" evidence="1">
    <location>
        <position position="852"/>
    </location>
</feature>
<proteinExistence type="evidence at protein level"/>
<dbReference type="EC" id="3.1.4.35" evidence="2"/>
<dbReference type="EMBL" id="M37838">
    <property type="protein sequence ID" value="AAA30687.1"/>
    <property type="molecule type" value="mRNA"/>
</dbReference>
<dbReference type="EMBL" id="M33140">
    <property type="protein sequence ID" value="AAA30688.1"/>
    <property type="molecule type" value="mRNA"/>
</dbReference>
<dbReference type="PIR" id="A34810">
    <property type="entry name" value="A34810"/>
</dbReference>
<dbReference type="RefSeq" id="NP_776844.1">
    <property type="nucleotide sequence ID" value="NM_174419.1"/>
</dbReference>
<dbReference type="PDB" id="3JAB">
    <property type="method" value="EM"/>
    <property type="resolution" value="11.00 A"/>
    <property type="chains" value="C/O=563-726"/>
</dbReference>
<dbReference type="PDB" id="3JBQ">
    <property type="method" value="EM"/>
    <property type="resolution" value="11.00 A"/>
    <property type="chains" value="B/F=556-811"/>
</dbReference>
<dbReference type="PDBsum" id="3JAB"/>
<dbReference type="PDBsum" id="3JBQ"/>
<dbReference type="SMR" id="P16586"/>
<dbReference type="CORUM" id="P16586"/>
<dbReference type="FunCoup" id="P16586">
    <property type="interactions" value="37"/>
</dbReference>
<dbReference type="STRING" id="9913.ENSBTAP00000000569"/>
<dbReference type="BindingDB" id="P16586"/>
<dbReference type="ChEMBL" id="CHEMBL3479"/>
<dbReference type="DrugCentral" id="P16586"/>
<dbReference type="PaxDb" id="9913-ENSBTAP00000000569"/>
<dbReference type="GeneID" id="281975"/>
<dbReference type="KEGG" id="bta:281975"/>
<dbReference type="CTD" id="5146"/>
<dbReference type="eggNOG" id="KOG3689">
    <property type="taxonomic scope" value="Eukaryota"/>
</dbReference>
<dbReference type="InParanoid" id="P16586"/>
<dbReference type="OrthoDB" id="546632at2759"/>
<dbReference type="PRO" id="PR:P16586"/>
<dbReference type="Proteomes" id="UP000009136">
    <property type="component" value="Unplaced"/>
</dbReference>
<dbReference type="GO" id="GO:0005886">
    <property type="term" value="C:plasma membrane"/>
    <property type="evidence" value="ECO:0007669"/>
    <property type="project" value="UniProtKB-SubCell"/>
</dbReference>
<dbReference type="GO" id="GO:0004115">
    <property type="term" value="F:3',5'-cyclic-AMP phosphodiesterase activity"/>
    <property type="evidence" value="ECO:0000318"/>
    <property type="project" value="GO_Central"/>
</dbReference>
<dbReference type="GO" id="GO:0047555">
    <property type="term" value="F:3',5'-cyclic-GMP phosphodiesterase activity"/>
    <property type="evidence" value="ECO:0000318"/>
    <property type="project" value="GO_Central"/>
</dbReference>
<dbReference type="GO" id="GO:0030553">
    <property type="term" value="F:cGMP binding"/>
    <property type="evidence" value="ECO:0007669"/>
    <property type="project" value="UniProtKB-KW"/>
</dbReference>
<dbReference type="GO" id="GO:0046872">
    <property type="term" value="F:metal ion binding"/>
    <property type="evidence" value="ECO:0007669"/>
    <property type="project" value="UniProtKB-KW"/>
</dbReference>
<dbReference type="GO" id="GO:0019933">
    <property type="term" value="P:cAMP-mediated signaling"/>
    <property type="evidence" value="ECO:0000318"/>
    <property type="project" value="GO_Central"/>
</dbReference>
<dbReference type="GO" id="GO:0007601">
    <property type="term" value="P:visual perception"/>
    <property type="evidence" value="ECO:0000318"/>
    <property type="project" value="GO_Central"/>
</dbReference>
<dbReference type="CDD" id="cd00077">
    <property type="entry name" value="HDc"/>
    <property type="match status" value="1"/>
</dbReference>
<dbReference type="FunFam" id="1.10.1300.10:FF:000005">
    <property type="entry name" value="Phosphodiesterase"/>
    <property type="match status" value="1"/>
</dbReference>
<dbReference type="FunFam" id="3.30.450.40:FF:000001">
    <property type="entry name" value="Phosphodiesterase"/>
    <property type="match status" value="1"/>
</dbReference>
<dbReference type="FunFam" id="3.30.450.40:FF:000010">
    <property type="entry name" value="Phosphodiesterase"/>
    <property type="match status" value="1"/>
</dbReference>
<dbReference type="Gene3D" id="3.30.450.40">
    <property type="match status" value="2"/>
</dbReference>
<dbReference type="Gene3D" id="1.10.1300.10">
    <property type="entry name" value="3'5'-cyclic nucleotide phosphodiesterase, catalytic domain"/>
    <property type="match status" value="1"/>
</dbReference>
<dbReference type="InterPro" id="IPR003018">
    <property type="entry name" value="GAF"/>
</dbReference>
<dbReference type="InterPro" id="IPR029016">
    <property type="entry name" value="GAF-like_dom_sf"/>
</dbReference>
<dbReference type="InterPro" id="IPR003607">
    <property type="entry name" value="HD/PDEase_dom"/>
</dbReference>
<dbReference type="InterPro" id="IPR023088">
    <property type="entry name" value="PDEase"/>
</dbReference>
<dbReference type="InterPro" id="IPR002073">
    <property type="entry name" value="PDEase_catalytic_dom"/>
</dbReference>
<dbReference type="InterPro" id="IPR036971">
    <property type="entry name" value="PDEase_catalytic_dom_sf"/>
</dbReference>
<dbReference type="InterPro" id="IPR023174">
    <property type="entry name" value="PDEase_CS"/>
</dbReference>
<dbReference type="PANTHER" id="PTHR11347">
    <property type="entry name" value="CYCLIC NUCLEOTIDE PHOSPHODIESTERASE"/>
    <property type="match status" value="1"/>
</dbReference>
<dbReference type="Pfam" id="PF01590">
    <property type="entry name" value="GAF"/>
    <property type="match status" value="2"/>
</dbReference>
<dbReference type="Pfam" id="PF00233">
    <property type="entry name" value="PDEase_I"/>
    <property type="match status" value="1"/>
</dbReference>
<dbReference type="PRINTS" id="PR00387">
    <property type="entry name" value="PDIESTERASE1"/>
</dbReference>
<dbReference type="SMART" id="SM00065">
    <property type="entry name" value="GAF"/>
    <property type="match status" value="2"/>
</dbReference>
<dbReference type="SMART" id="SM00471">
    <property type="entry name" value="HDc"/>
    <property type="match status" value="1"/>
</dbReference>
<dbReference type="SUPFAM" id="SSF55781">
    <property type="entry name" value="GAF domain-like"/>
    <property type="match status" value="2"/>
</dbReference>
<dbReference type="SUPFAM" id="SSF109604">
    <property type="entry name" value="HD-domain/PDEase-like"/>
    <property type="match status" value="1"/>
</dbReference>
<dbReference type="PROSITE" id="PS00126">
    <property type="entry name" value="PDEASE_I_1"/>
    <property type="match status" value="1"/>
</dbReference>
<dbReference type="PROSITE" id="PS51845">
    <property type="entry name" value="PDEASE_I_2"/>
    <property type="match status" value="1"/>
</dbReference>
<evidence type="ECO:0000250" key="1"/>
<evidence type="ECO:0000250" key="2">
    <source>
        <dbReference type="UniProtKB" id="P51160"/>
    </source>
</evidence>
<evidence type="ECO:0000255" key="3"/>
<evidence type="ECO:0000255" key="4">
    <source>
        <dbReference type="PROSITE-ProRule" id="PRU01192"/>
    </source>
</evidence>
<evidence type="ECO:0000256" key="5">
    <source>
        <dbReference type="SAM" id="MobiDB-lite"/>
    </source>
</evidence>
<evidence type="ECO:0000305" key="6"/>
<reference key="1">
    <citation type="journal article" date="1990" name="Proc. Natl. Acad. Sci. U.S.A.">
        <title>Bovine cone photoreceptor cGMP phosphodiesterase structure deduced from a cDNA clone.</title>
        <authorList>
            <person name="Li T."/>
            <person name="Volpp K."/>
            <person name="Applebury M.L."/>
        </authorList>
    </citation>
    <scope>NUCLEOTIDE SEQUENCE [MRNA]</scope>
</reference>
<reference key="2">
    <citation type="journal article" date="1990" name="Proc. Natl. Acad. Sci. U.S.A.">
        <title>Identification of a noncatalytic cGMP-binding domain conserved in both the cGMP-stimulated and photoreceptor cyclic nucleotide phosphodiesterases.</title>
        <authorList>
            <person name="Charbonneau H."/>
            <person name="Prusti R.K."/>
            <person name="Letrong H."/>
            <person name="Sonnenburg W.K."/>
            <person name="Mullaney P.J."/>
            <person name="Walsh K."/>
            <person name="Beavo J.A."/>
        </authorList>
    </citation>
    <scope>NUCLEOTIDE SEQUENCE [MRNA] OF 308-502</scope>
    <scope>PARTIAL PROTEIN SEQUENCE</scope>
</reference>
<organism>
    <name type="scientific">Bos taurus</name>
    <name type="common">Bovine</name>
    <dbReference type="NCBI Taxonomy" id="9913"/>
    <lineage>
        <taxon>Eukaryota</taxon>
        <taxon>Metazoa</taxon>
        <taxon>Chordata</taxon>
        <taxon>Craniata</taxon>
        <taxon>Vertebrata</taxon>
        <taxon>Euteleostomi</taxon>
        <taxon>Mammalia</taxon>
        <taxon>Eutheria</taxon>
        <taxon>Laurasiatheria</taxon>
        <taxon>Artiodactyla</taxon>
        <taxon>Ruminantia</taxon>
        <taxon>Pecora</taxon>
        <taxon>Bovidae</taxon>
        <taxon>Bovinae</taxon>
        <taxon>Bos</taxon>
    </lineage>
</organism>
<keyword id="KW-0002">3D-structure</keyword>
<keyword id="KW-1003">Cell membrane</keyword>
<keyword id="KW-0140">cGMP</keyword>
<keyword id="KW-0142">cGMP-binding</keyword>
<keyword id="KW-0903">Direct protein sequencing</keyword>
<keyword id="KW-0378">Hydrolase</keyword>
<keyword id="KW-0449">Lipoprotein</keyword>
<keyword id="KW-0472">Membrane</keyword>
<keyword id="KW-0479">Metal-binding</keyword>
<keyword id="KW-0488">Methylation</keyword>
<keyword id="KW-0547">Nucleotide-binding</keyword>
<keyword id="KW-0636">Prenylation</keyword>
<keyword id="KW-1185">Reference proteome</keyword>
<keyword id="KW-0677">Repeat</keyword>
<keyword id="KW-0716">Sensory transduction</keyword>
<keyword id="KW-0844">Vision</keyword>
<protein>
    <recommendedName>
        <fullName>Cone cGMP-specific 3',5'-cyclic phosphodiesterase subunit alpha'</fullName>
        <ecNumber evidence="2">3.1.4.35</ecNumber>
    </recommendedName>
    <alternativeName>
        <fullName>PDE V-C1</fullName>
    </alternativeName>
    <alternativeName>
        <fullName>cGMP phosphodiesterase 6C</fullName>
    </alternativeName>
</protein>
<name>PDE6C_BOVIN</name>
<accession>P16586</accession>
<sequence>MGEISQETVEKYLEANPQFAKEYFNRKLQVEVPSGGAQAPASASFPGRTLAEEAALYLELLEVLLEEAGSVELAAHRALQRLAQLLQADRCSMFLCRARNGTPEVASKLLDVTPTSKFEDNLVVPDREAVFPLDVGIVGWVAHTKKTFNVPDVKKNSHFSDFMDKQTGYVTRNLLATPIVMGKEVLAVFMAVNKVDASEFSKQDEEVFSKYLSFVSIILKLHHTNYLYNIESRRSQILMWSANKVFEELTDVERQFHKALYTVRTYLNCERYSIGLLDMTKEKEFYDEWPVKLGEVEPYKGPKTPDGREVIFYKIIDYILHGKEEIKVIPTPPMDHWTLISGLPTYVAENGFICNMLNAPADEYFTFQKGPVDETGWVIKNVLSLPIVNKKEDIVGVATFYNRKDGKPFDEYDEHIAETLTQFLGWSLLNTDTYEKMNKLENRKDIAQEMLMNHTKATPDEIKSILKFKEKLNIDVIEDCEEKQLVTILKEDLPDPRTADLYEFRFRHLPITEHELIKCGLRLFFEINVVEKFKVPVEVLTRWMYTVRKGYRAVTYHNWRHGFNVGQTMFTLLMTGRLKKYYTDLEAFAMLAAAFCHDIDHRGTNNLYQMKSTSPLARLHGSSILERHHLEYSKTLLQDESLNIFQNLNKRQYETVIHLFEVAIIATDLALYFKKRTMFQKIVDACEKMETEEEAIKYVTIDPTKKEIIMAMMMTACDLSAITKPWEVQSQVALLVANEFWEQGDLERTVLQQQPIPMMDRNKKDELPKLQVGFIDFVCTFVYKEFSRFHKEITPMLNGLQNNRVEWKSLADEYDEKMKVIEEMKKQEEGNTTEKAVEDSGGGGDDKKSKTCLML</sequence>
<gene>
    <name type="primary">PDE6C</name>
    <name type="synonym">PDEA2</name>
</gene>